<accession>Q2SRZ9</accession>
<feature type="chain" id="PRO_1000001789" description="Phosphate acyltransferase">
    <location>
        <begin position="1"/>
        <end position="334"/>
    </location>
</feature>
<protein>
    <recommendedName>
        <fullName evidence="1">Phosphate acyltransferase</fullName>
        <ecNumber evidence="1">2.3.1.274</ecNumber>
    </recommendedName>
    <alternativeName>
        <fullName evidence="1">Acyl-ACP phosphotransacylase</fullName>
    </alternativeName>
    <alternativeName>
        <fullName evidence="1">Acyl-[acyl-carrier-protein]--phosphate acyltransferase</fullName>
    </alternativeName>
    <alternativeName>
        <fullName evidence="1">Phosphate-acyl-ACP acyltransferase</fullName>
    </alternativeName>
</protein>
<reference key="1">
    <citation type="submission" date="2005-09" db="EMBL/GenBank/DDBJ databases">
        <authorList>
            <person name="Glass J.I."/>
            <person name="Lartigue C."/>
            <person name="Pfannkoch C."/>
            <person name="Baden-Tillson H."/>
            <person name="Smith H.O."/>
            <person name="Venter J.C."/>
            <person name="Roske K."/>
            <person name="Wise K.S."/>
            <person name="Calcutt M.J."/>
            <person name="Nelson W.C."/>
            <person name="Nierman W.C."/>
        </authorList>
    </citation>
    <scope>NUCLEOTIDE SEQUENCE [LARGE SCALE GENOMIC DNA]</scope>
    <source>
        <strain>California kid / ATCC 27343 / NCTC 10154</strain>
    </source>
</reference>
<name>PLSX_MYCCT</name>
<keyword id="KW-0963">Cytoplasm</keyword>
<keyword id="KW-0444">Lipid biosynthesis</keyword>
<keyword id="KW-0443">Lipid metabolism</keyword>
<keyword id="KW-0594">Phospholipid biosynthesis</keyword>
<keyword id="KW-1208">Phospholipid metabolism</keyword>
<keyword id="KW-0808">Transferase</keyword>
<gene>
    <name evidence="1" type="primary">plsX</name>
    <name type="ordered locus">MCAP_0491</name>
</gene>
<dbReference type="EC" id="2.3.1.274" evidence="1"/>
<dbReference type="EMBL" id="CP000123">
    <property type="protein sequence ID" value="ABC01297.1"/>
    <property type="molecule type" value="Genomic_DNA"/>
</dbReference>
<dbReference type="RefSeq" id="WP_011387362.1">
    <property type="nucleotide sequence ID" value="NC_007633.1"/>
</dbReference>
<dbReference type="SMR" id="Q2SRZ9"/>
<dbReference type="GeneID" id="23778553"/>
<dbReference type="KEGG" id="mcp:MCAP_0491"/>
<dbReference type="HOGENOM" id="CLU_039379_1_1_14"/>
<dbReference type="PhylomeDB" id="Q2SRZ9"/>
<dbReference type="UniPathway" id="UPA00085"/>
<dbReference type="Proteomes" id="UP000001928">
    <property type="component" value="Chromosome"/>
</dbReference>
<dbReference type="GO" id="GO:0005737">
    <property type="term" value="C:cytoplasm"/>
    <property type="evidence" value="ECO:0007669"/>
    <property type="project" value="UniProtKB-SubCell"/>
</dbReference>
<dbReference type="GO" id="GO:0043811">
    <property type="term" value="F:phosphate:acyl-[acyl carrier protein] acyltransferase activity"/>
    <property type="evidence" value="ECO:0007669"/>
    <property type="project" value="UniProtKB-UniRule"/>
</dbReference>
<dbReference type="GO" id="GO:0006633">
    <property type="term" value="P:fatty acid biosynthetic process"/>
    <property type="evidence" value="ECO:0007669"/>
    <property type="project" value="UniProtKB-UniRule"/>
</dbReference>
<dbReference type="GO" id="GO:0008654">
    <property type="term" value="P:phospholipid biosynthetic process"/>
    <property type="evidence" value="ECO:0007669"/>
    <property type="project" value="UniProtKB-KW"/>
</dbReference>
<dbReference type="Gene3D" id="3.40.718.10">
    <property type="entry name" value="Isopropylmalate Dehydrogenase"/>
    <property type="match status" value="1"/>
</dbReference>
<dbReference type="HAMAP" id="MF_00019">
    <property type="entry name" value="PlsX"/>
    <property type="match status" value="1"/>
</dbReference>
<dbReference type="InterPro" id="IPR003664">
    <property type="entry name" value="FA_synthesis"/>
</dbReference>
<dbReference type="InterPro" id="IPR012281">
    <property type="entry name" value="Phospholipid_synth_PlsX-like"/>
</dbReference>
<dbReference type="NCBIfam" id="TIGR00182">
    <property type="entry name" value="plsX"/>
    <property type="match status" value="1"/>
</dbReference>
<dbReference type="PANTHER" id="PTHR30100">
    <property type="entry name" value="FATTY ACID/PHOSPHOLIPID SYNTHESIS PROTEIN PLSX"/>
    <property type="match status" value="1"/>
</dbReference>
<dbReference type="PANTHER" id="PTHR30100:SF1">
    <property type="entry name" value="PHOSPHATE ACYLTRANSFERASE"/>
    <property type="match status" value="1"/>
</dbReference>
<dbReference type="Pfam" id="PF02504">
    <property type="entry name" value="FA_synthesis"/>
    <property type="match status" value="1"/>
</dbReference>
<dbReference type="PIRSF" id="PIRSF002465">
    <property type="entry name" value="Phsphlp_syn_PlsX"/>
    <property type="match status" value="1"/>
</dbReference>
<dbReference type="SUPFAM" id="SSF53659">
    <property type="entry name" value="Isocitrate/Isopropylmalate dehydrogenase-like"/>
    <property type="match status" value="1"/>
</dbReference>
<evidence type="ECO:0000255" key="1">
    <source>
        <dbReference type="HAMAP-Rule" id="MF_00019"/>
    </source>
</evidence>
<comment type="function">
    <text evidence="1">Catalyzes the reversible formation of acyl-phosphate (acyl-PO(4)) from acyl-[acyl-carrier-protein] (acyl-ACP). This enzyme utilizes acyl-ACP as fatty acyl donor, but not acyl-CoA.</text>
</comment>
<comment type="catalytic activity">
    <reaction evidence="1">
        <text>a fatty acyl-[ACP] + phosphate = an acyl phosphate + holo-[ACP]</text>
        <dbReference type="Rhea" id="RHEA:42292"/>
        <dbReference type="Rhea" id="RHEA-COMP:9685"/>
        <dbReference type="Rhea" id="RHEA-COMP:14125"/>
        <dbReference type="ChEBI" id="CHEBI:43474"/>
        <dbReference type="ChEBI" id="CHEBI:59918"/>
        <dbReference type="ChEBI" id="CHEBI:64479"/>
        <dbReference type="ChEBI" id="CHEBI:138651"/>
        <dbReference type="EC" id="2.3.1.274"/>
    </reaction>
</comment>
<comment type="pathway">
    <text evidence="1">Lipid metabolism; phospholipid metabolism.</text>
</comment>
<comment type="subunit">
    <text evidence="1">Homodimer. Probably interacts with PlsY.</text>
</comment>
<comment type="subcellular location">
    <subcellularLocation>
        <location evidence="1">Cytoplasm</location>
    </subcellularLocation>
    <text evidence="1">Associated with the membrane possibly through PlsY.</text>
</comment>
<comment type="similarity">
    <text evidence="1">Belongs to the PlsX family.</text>
</comment>
<proteinExistence type="inferred from homology"/>
<sequence>MYKIAFDVMGSDLGSLTAIKAASEFIKEHNDLYLILVGDETEIKTALEQNPIDKNKYEILPTTQVIDMNGSILDIRRKKDASIIRTLELVRDQKVDGMLTAGNSAAFIGAAHFILGELNNIVRAGFMPTMPNAKNKLTLLLDVGANSENTPEDLINYAKMANIYYTEVLKNPNATVGLLNIGTEKSKGLELQKQTFKQLEKLKNINFVGNVESRDVLTGNVDIIVTDGYSGNICLKACEGAAKVLLTEIKKEITSSFIRKLAALVLKKSFKNVAAKFDYKNHAGAILLGVKGICFKSHGSSDVRSFKATLRMTLDAIKNNIVEKIEKGLIKNEY</sequence>
<organism>
    <name type="scientific">Mycoplasma capricolum subsp. capricolum (strain California kid / ATCC 27343 / NCTC 10154)</name>
    <dbReference type="NCBI Taxonomy" id="340047"/>
    <lineage>
        <taxon>Bacteria</taxon>
        <taxon>Bacillati</taxon>
        <taxon>Mycoplasmatota</taxon>
        <taxon>Mollicutes</taxon>
        <taxon>Mycoplasmataceae</taxon>
        <taxon>Mycoplasma</taxon>
    </lineage>
</organism>